<organism>
    <name type="scientific">Acinetobacter baumannii (strain AYE)</name>
    <dbReference type="NCBI Taxonomy" id="509173"/>
    <lineage>
        <taxon>Bacteria</taxon>
        <taxon>Pseudomonadati</taxon>
        <taxon>Pseudomonadota</taxon>
        <taxon>Gammaproteobacteria</taxon>
        <taxon>Moraxellales</taxon>
        <taxon>Moraxellaceae</taxon>
        <taxon>Acinetobacter</taxon>
        <taxon>Acinetobacter calcoaceticus/baumannii complex</taxon>
    </lineage>
</organism>
<dbReference type="EC" id="2.7.7.6" evidence="1"/>
<dbReference type="EMBL" id="CU459141">
    <property type="protein sequence ID" value="CAM85407.1"/>
    <property type="molecule type" value="Genomic_DNA"/>
</dbReference>
<dbReference type="RefSeq" id="WP_000198631.1">
    <property type="nucleotide sequence ID" value="NZ_JBDGFB010000011.1"/>
</dbReference>
<dbReference type="SMR" id="B0V6U7"/>
<dbReference type="EnsemblBacteria" id="CAM85407">
    <property type="protein sequence ID" value="CAM85407"/>
    <property type="gene ID" value="ABAYE0433"/>
</dbReference>
<dbReference type="GeneID" id="92895292"/>
<dbReference type="KEGG" id="aby:ABAYE0433"/>
<dbReference type="HOGENOM" id="CLU_053084_0_0_6"/>
<dbReference type="GO" id="GO:0005737">
    <property type="term" value="C:cytoplasm"/>
    <property type="evidence" value="ECO:0007669"/>
    <property type="project" value="UniProtKB-ARBA"/>
</dbReference>
<dbReference type="GO" id="GO:0000428">
    <property type="term" value="C:DNA-directed RNA polymerase complex"/>
    <property type="evidence" value="ECO:0007669"/>
    <property type="project" value="UniProtKB-KW"/>
</dbReference>
<dbReference type="GO" id="GO:0003677">
    <property type="term" value="F:DNA binding"/>
    <property type="evidence" value="ECO:0007669"/>
    <property type="project" value="UniProtKB-UniRule"/>
</dbReference>
<dbReference type="GO" id="GO:0003899">
    <property type="term" value="F:DNA-directed RNA polymerase activity"/>
    <property type="evidence" value="ECO:0007669"/>
    <property type="project" value="UniProtKB-UniRule"/>
</dbReference>
<dbReference type="GO" id="GO:0046983">
    <property type="term" value="F:protein dimerization activity"/>
    <property type="evidence" value="ECO:0007669"/>
    <property type="project" value="InterPro"/>
</dbReference>
<dbReference type="GO" id="GO:0006351">
    <property type="term" value="P:DNA-templated transcription"/>
    <property type="evidence" value="ECO:0007669"/>
    <property type="project" value="UniProtKB-UniRule"/>
</dbReference>
<dbReference type="CDD" id="cd06928">
    <property type="entry name" value="RNAP_alpha_NTD"/>
    <property type="match status" value="1"/>
</dbReference>
<dbReference type="FunFam" id="1.10.150.20:FF:000001">
    <property type="entry name" value="DNA-directed RNA polymerase subunit alpha"/>
    <property type="match status" value="1"/>
</dbReference>
<dbReference type="FunFam" id="2.170.120.12:FF:000001">
    <property type="entry name" value="DNA-directed RNA polymerase subunit alpha"/>
    <property type="match status" value="1"/>
</dbReference>
<dbReference type="Gene3D" id="1.10.150.20">
    <property type="entry name" value="5' to 3' exonuclease, C-terminal subdomain"/>
    <property type="match status" value="1"/>
</dbReference>
<dbReference type="Gene3D" id="2.170.120.12">
    <property type="entry name" value="DNA-directed RNA polymerase, insert domain"/>
    <property type="match status" value="1"/>
</dbReference>
<dbReference type="Gene3D" id="3.30.1360.10">
    <property type="entry name" value="RNA polymerase, RBP11-like subunit"/>
    <property type="match status" value="1"/>
</dbReference>
<dbReference type="HAMAP" id="MF_00059">
    <property type="entry name" value="RNApol_bact_RpoA"/>
    <property type="match status" value="1"/>
</dbReference>
<dbReference type="InterPro" id="IPR011262">
    <property type="entry name" value="DNA-dir_RNA_pol_insert"/>
</dbReference>
<dbReference type="InterPro" id="IPR011263">
    <property type="entry name" value="DNA-dir_RNA_pol_RpoA/D/Rpb3"/>
</dbReference>
<dbReference type="InterPro" id="IPR011773">
    <property type="entry name" value="DNA-dir_RpoA"/>
</dbReference>
<dbReference type="InterPro" id="IPR036603">
    <property type="entry name" value="RBP11-like"/>
</dbReference>
<dbReference type="InterPro" id="IPR011260">
    <property type="entry name" value="RNAP_asu_C"/>
</dbReference>
<dbReference type="InterPro" id="IPR036643">
    <property type="entry name" value="RNApol_insert_sf"/>
</dbReference>
<dbReference type="NCBIfam" id="NF003513">
    <property type="entry name" value="PRK05182.1-2"/>
    <property type="match status" value="1"/>
</dbReference>
<dbReference type="NCBIfam" id="NF003519">
    <property type="entry name" value="PRK05182.2-5"/>
    <property type="match status" value="1"/>
</dbReference>
<dbReference type="NCBIfam" id="TIGR02027">
    <property type="entry name" value="rpoA"/>
    <property type="match status" value="1"/>
</dbReference>
<dbReference type="Pfam" id="PF01000">
    <property type="entry name" value="RNA_pol_A_bac"/>
    <property type="match status" value="1"/>
</dbReference>
<dbReference type="Pfam" id="PF03118">
    <property type="entry name" value="RNA_pol_A_CTD"/>
    <property type="match status" value="1"/>
</dbReference>
<dbReference type="Pfam" id="PF01193">
    <property type="entry name" value="RNA_pol_L"/>
    <property type="match status" value="1"/>
</dbReference>
<dbReference type="SMART" id="SM00662">
    <property type="entry name" value="RPOLD"/>
    <property type="match status" value="1"/>
</dbReference>
<dbReference type="SUPFAM" id="SSF47789">
    <property type="entry name" value="C-terminal domain of RNA polymerase alpha subunit"/>
    <property type="match status" value="1"/>
</dbReference>
<dbReference type="SUPFAM" id="SSF56553">
    <property type="entry name" value="Insert subdomain of RNA polymerase alpha subunit"/>
    <property type="match status" value="1"/>
</dbReference>
<dbReference type="SUPFAM" id="SSF55257">
    <property type="entry name" value="RBP11-like subunits of RNA polymerase"/>
    <property type="match status" value="1"/>
</dbReference>
<proteinExistence type="inferred from homology"/>
<evidence type="ECO:0000255" key="1">
    <source>
        <dbReference type="HAMAP-Rule" id="MF_00059"/>
    </source>
</evidence>
<reference key="1">
    <citation type="journal article" date="2008" name="PLoS ONE">
        <title>Comparative analysis of Acinetobacters: three genomes for three lifestyles.</title>
        <authorList>
            <person name="Vallenet D."/>
            <person name="Nordmann P."/>
            <person name="Barbe V."/>
            <person name="Poirel L."/>
            <person name="Mangenot S."/>
            <person name="Bataille E."/>
            <person name="Dossat C."/>
            <person name="Gas S."/>
            <person name="Kreimeyer A."/>
            <person name="Lenoble P."/>
            <person name="Oztas S."/>
            <person name="Poulain J."/>
            <person name="Segurens B."/>
            <person name="Robert C."/>
            <person name="Abergel C."/>
            <person name="Claverie J.-M."/>
            <person name="Raoult D."/>
            <person name="Medigue C."/>
            <person name="Weissenbach J."/>
            <person name="Cruveiller S."/>
        </authorList>
    </citation>
    <scope>NUCLEOTIDE SEQUENCE [LARGE SCALE GENOMIC DNA]</scope>
    <source>
        <strain>AYE</strain>
    </source>
</reference>
<sequence>MTRTANEFLTPQAIKVEAVSGTSAKVILEPLERGFGHTLGNALRRILLSSLPGAAVVEVEIEGVEHEYSTLEGLQQDIVELLLNLKGLSIKLFDQNEAYLTLEKQGPGDITAADLRLPHNVEVVNPEHLIGTLSATGSLKMRLKVSQGRGYETSDSRFPEGETRPVGRLQLDASYSPIKRVSYTVENARVEQRTDLDKLVIDLETNGTVDPEEAIRKAATILQQQIAIFVDLQKDQTPVAQEPREEVDPILLRPVDDLELTVRSANCLKAENIYYIGDLVQRTEVELLKTPNLGKKSLTEIKDVLASKGLQLGMRLENWPPASLRMDDRFAYRSR</sequence>
<comment type="function">
    <text evidence="1">DNA-dependent RNA polymerase catalyzes the transcription of DNA into RNA using the four ribonucleoside triphosphates as substrates.</text>
</comment>
<comment type="catalytic activity">
    <reaction evidence="1">
        <text>RNA(n) + a ribonucleoside 5'-triphosphate = RNA(n+1) + diphosphate</text>
        <dbReference type="Rhea" id="RHEA:21248"/>
        <dbReference type="Rhea" id="RHEA-COMP:14527"/>
        <dbReference type="Rhea" id="RHEA-COMP:17342"/>
        <dbReference type="ChEBI" id="CHEBI:33019"/>
        <dbReference type="ChEBI" id="CHEBI:61557"/>
        <dbReference type="ChEBI" id="CHEBI:140395"/>
        <dbReference type="EC" id="2.7.7.6"/>
    </reaction>
</comment>
<comment type="subunit">
    <text evidence="1">Homodimer. The RNAP catalytic core consists of 2 alpha, 1 beta, 1 beta' and 1 omega subunit. When a sigma factor is associated with the core the holoenzyme is formed, which can initiate transcription.</text>
</comment>
<comment type="domain">
    <text evidence="1">The N-terminal domain is essential for RNAP assembly and basal transcription, whereas the C-terminal domain is involved in interaction with transcriptional regulators and with upstream promoter elements.</text>
</comment>
<comment type="similarity">
    <text evidence="1">Belongs to the RNA polymerase alpha chain family.</text>
</comment>
<accession>B0V6U7</accession>
<keyword id="KW-0240">DNA-directed RNA polymerase</keyword>
<keyword id="KW-0548">Nucleotidyltransferase</keyword>
<keyword id="KW-0804">Transcription</keyword>
<keyword id="KW-0808">Transferase</keyword>
<gene>
    <name evidence="1" type="primary">rpoA</name>
    <name type="ordered locus">ABAYE0433</name>
</gene>
<feature type="chain" id="PRO_1000091920" description="DNA-directed RNA polymerase subunit alpha">
    <location>
        <begin position="1"/>
        <end position="335"/>
    </location>
</feature>
<feature type="region of interest" description="Alpha N-terminal domain (alpha-NTD)" evidence="1">
    <location>
        <begin position="1"/>
        <end position="233"/>
    </location>
</feature>
<feature type="region of interest" description="Alpha C-terminal domain (alpha-CTD)" evidence="1">
    <location>
        <begin position="247"/>
        <end position="335"/>
    </location>
</feature>
<protein>
    <recommendedName>
        <fullName evidence="1">DNA-directed RNA polymerase subunit alpha</fullName>
        <shortName evidence="1">RNAP subunit alpha</shortName>
        <ecNumber evidence="1">2.7.7.6</ecNumber>
    </recommendedName>
    <alternativeName>
        <fullName evidence="1">RNA polymerase subunit alpha</fullName>
    </alternativeName>
    <alternativeName>
        <fullName evidence="1">Transcriptase subunit alpha</fullName>
    </alternativeName>
</protein>
<name>RPOA_ACIBY</name>